<name>DKK4_HUMAN</name>
<dbReference type="EMBL" id="AF177397">
    <property type="protein sequence ID" value="AAF02677.1"/>
    <property type="molecule type" value="mRNA"/>
</dbReference>
<dbReference type="EMBL" id="AB018005">
    <property type="protein sequence ID" value="BAA33475.1"/>
    <property type="molecule type" value="Genomic_DNA"/>
</dbReference>
<dbReference type="EMBL" id="AB017788">
    <property type="protein sequence ID" value="BAA33438.1"/>
    <property type="molecule type" value="mRNA"/>
</dbReference>
<dbReference type="EMBL" id="BC107046">
    <property type="protein sequence ID" value="AAI07047.1"/>
    <property type="molecule type" value="mRNA"/>
</dbReference>
<dbReference type="EMBL" id="BC107047">
    <property type="protein sequence ID" value="AAI07048.1"/>
    <property type="molecule type" value="mRNA"/>
</dbReference>
<dbReference type="CCDS" id="CCDS6130.1"/>
<dbReference type="RefSeq" id="NP_055235.1">
    <property type="nucleotide sequence ID" value="NM_014420.3"/>
</dbReference>
<dbReference type="RefSeq" id="XP_011542790.1">
    <property type="nucleotide sequence ID" value="XM_011544488.3"/>
</dbReference>
<dbReference type="RefSeq" id="XP_016868805.1">
    <property type="nucleotide sequence ID" value="XM_017013316.2"/>
</dbReference>
<dbReference type="RefSeq" id="XP_054216270.1">
    <property type="nucleotide sequence ID" value="XM_054360295.1"/>
</dbReference>
<dbReference type="RefSeq" id="XP_054216271.1">
    <property type="nucleotide sequence ID" value="XM_054360296.1"/>
</dbReference>
<dbReference type="PDB" id="5O57">
    <property type="method" value="NMR"/>
    <property type="chains" value="A=19-97"/>
</dbReference>
<dbReference type="PDBsum" id="5O57"/>
<dbReference type="SMR" id="Q9UBT3"/>
<dbReference type="BioGRID" id="118012">
    <property type="interactions" value="9"/>
</dbReference>
<dbReference type="FunCoup" id="Q9UBT3">
    <property type="interactions" value="170"/>
</dbReference>
<dbReference type="IntAct" id="Q9UBT3">
    <property type="interactions" value="9"/>
</dbReference>
<dbReference type="STRING" id="9606.ENSP00000220812"/>
<dbReference type="GlyGen" id="Q9UBT3">
    <property type="glycosylation" value="1 site, 1 O-linked glycan (1 site)"/>
</dbReference>
<dbReference type="PhosphoSitePlus" id="Q9UBT3"/>
<dbReference type="BioMuta" id="DKK4"/>
<dbReference type="DMDM" id="13124092"/>
<dbReference type="MassIVE" id="Q9UBT3"/>
<dbReference type="PaxDb" id="9606-ENSP00000220812"/>
<dbReference type="PeptideAtlas" id="Q9UBT3"/>
<dbReference type="ProteomicsDB" id="84056"/>
<dbReference type="Antibodypedia" id="24127">
    <property type="antibodies" value="402 antibodies from 32 providers"/>
</dbReference>
<dbReference type="DNASU" id="27121"/>
<dbReference type="Ensembl" id="ENST00000220812.3">
    <property type="protein sequence ID" value="ENSP00000220812.2"/>
    <property type="gene ID" value="ENSG00000104371.5"/>
</dbReference>
<dbReference type="GeneID" id="27121"/>
<dbReference type="KEGG" id="hsa:27121"/>
<dbReference type="MANE-Select" id="ENST00000220812.3">
    <property type="protein sequence ID" value="ENSP00000220812.2"/>
    <property type="RefSeq nucleotide sequence ID" value="NM_014420.3"/>
    <property type="RefSeq protein sequence ID" value="NP_055235.1"/>
</dbReference>
<dbReference type="UCSC" id="uc003xpb.4">
    <property type="organism name" value="human"/>
</dbReference>
<dbReference type="AGR" id="HGNC:2894"/>
<dbReference type="CTD" id="27121"/>
<dbReference type="DisGeNET" id="27121"/>
<dbReference type="GeneCards" id="DKK4"/>
<dbReference type="HGNC" id="HGNC:2894">
    <property type="gene designation" value="DKK4"/>
</dbReference>
<dbReference type="HPA" id="ENSG00000104371">
    <property type="expression patterns" value="Tissue enhanced (esophagus, intestine)"/>
</dbReference>
<dbReference type="MIM" id="605417">
    <property type="type" value="gene"/>
</dbReference>
<dbReference type="neXtProt" id="NX_Q9UBT3"/>
<dbReference type="OpenTargets" id="ENSG00000104371"/>
<dbReference type="PharmGKB" id="PA27348"/>
<dbReference type="VEuPathDB" id="HostDB:ENSG00000104371"/>
<dbReference type="eggNOG" id="KOG1218">
    <property type="taxonomic scope" value="Eukaryota"/>
</dbReference>
<dbReference type="GeneTree" id="ENSGT00940000161614"/>
<dbReference type="HOGENOM" id="CLU_080459_1_0_1"/>
<dbReference type="InParanoid" id="Q9UBT3"/>
<dbReference type="OMA" id="QRSAMCC"/>
<dbReference type="OrthoDB" id="4321958at2759"/>
<dbReference type="PAN-GO" id="Q9UBT3">
    <property type="GO annotations" value="4 GO annotations based on evolutionary models"/>
</dbReference>
<dbReference type="PhylomeDB" id="Q9UBT3"/>
<dbReference type="TreeFam" id="TF330916"/>
<dbReference type="PathwayCommons" id="Q9UBT3"/>
<dbReference type="Reactome" id="R-HSA-201681">
    <property type="pathway name" value="TCF dependent signaling in response to WNT"/>
</dbReference>
<dbReference type="Reactome" id="R-HSA-3772470">
    <property type="pathway name" value="Negative regulation of TCF-dependent signaling by WNT ligand antagonists"/>
</dbReference>
<dbReference type="Reactome" id="R-HSA-5339717">
    <property type="pathway name" value="Signaling by LRP5 mutants"/>
</dbReference>
<dbReference type="SignaLink" id="Q9UBT3"/>
<dbReference type="BioGRID-ORCS" id="27121">
    <property type="hits" value="9 hits in 1145 CRISPR screens"/>
</dbReference>
<dbReference type="GenomeRNAi" id="27121"/>
<dbReference type="Pharos" id="Q9UBT3">
    <property type="development level" value="Tbio"/>
</dbReference>
<dbReference type="PRO" id="PR:Q9UBT3"/>
<dbReference type="Proteomes" id="UP000005640">
    <property type="component" value="Chromosome 8"/>
</dbReference>
<dbReference type="RNAct" id="Q9UBT3">
    <property type="molecule type" value="protein"/>
</dbReference>
<dbReference type="Bgee" id="ENSG00000104371">
    <property type="expression patterns" value="Expressed in male germ line stem cell (sensu Vertebrata) in testis and 85 other cell types or tissues"/>
</dbReference>
<dbReference type="GO" id="GO:0005615">
    <property type="term" value="C:extracellular space"/>
    <property type="evidence" value="ECO:0000318"/>
    <property type="project" value="GO_Central"/>
</dbReference>
<dbReference type="GO" id="GO:0039706">
    <property type="term" value="F:co-receptor binding"/>
    <property type="evidence" value="ECO:0000318"/>
    <property type="project" value="GO_Central"/>
</dbReference>
<dbReference type="GO" id="GO:0048019">
    <property type="term" value="F:receptor antagonist activity"/>
    <property type="evidence" value="ECO:0000318"/>
    <property type="project" value="GO_Central"/>
</dbReference>
<dbReference type="GO" id="GO:0090090">
    <property type="term" value="P:negative regulation of canonical Wnt signaling pathway"/>
    <property type="evidence" value="ECO:0000318"/>
    <property type="project" value="GO_Central"/>
</dbReference>
<dbReference type="GO" id="GO:0061170">
    <property type="term" value="P:negative regulation of hair follicle placode formation"/>
    <property type="evidence" value="ECO:0007669"/>
    <property type="project" value="Ensembl"/>
</dbReference>
<dbReference type="GO" id="GO:0030178">
    <property type="term" value="P:negative regulation of Wnt signaling pathway"/>
    <property type="evidence" value="ECO:0000303"/>
    <property type="project" value="UniProtKB"/>
</dbReference>
<dbReference type="GO" id="GO:0016055">
    <property type="term" value="P:Wnt signaling pathway"/>
    <property type="evidence" value="ECO:0007669"/>
    <property type="project" value="UniProtKB-KW"/>
</dbReference>
<dbReference type="CDD" id="cd23013">
    <property type="entry name" value="Dkk4_Cys1"/>
    <property type="match status" value="1"/>
</dbReference>
<dbReference type="CDD" id="cd23275">
    <property type="entry name" value="Dkk4_Cys2"/>
    <property type="match status" value="1"/>
</dbReference>
<dbReference type="FunFam" id="2.10.80.10:FF:000001">
    <property type="entry name" value="Dickkopf WNT-signaling pathway inhibitor 2"/>
    <property type="match status" value="1"/>
</dbReference>
<dbReference type="Gene3D" id="2.10.80.10">
    <property type="entry name" value="Lipase, subunit A"/>
    <property type="match status" value="1"/>
</dbReference>
<dbReference type="InterPro" id="IPR006796">
    <property type="entry name" value="Dickkopf_N"/>
</dbReference>
<dbReference type="InterPro" id="IPR048500">
    <property type="entry name" value="DIKK1/2/4_C-subdom1"/>
</dbReference>
<dbReference type="InterPro" id="IPR048499">
    <property type="entry name" value="DIKK1/2/4_C-subdom2"/>
</dbReference>
<dbReference type="InterPro" id="IPR039863">
    <property type="entry name" value="DKK1-4"/>
</dbReference>
<dbReference type="InterPro" id="IPR047299">
    <property type="entry name" value="Dkk4_Cys2"/>
</dbReference>
<dbReference type="PANTHER" id="PTHR12113:SF10">
    <property type="entry name" value="DICKKOPF-RELATED PROTEIN 4"/>
    <property type="match status" value="1"/>
</dbReference>
<dbReference type="PANTHER" id="PTHR12113">
    <property type="entry name" value="DICKKOPF3-LIKE 3"/>
    <property type="match status" value="1"/>
</dbReference>
<dbReference type="Pfam" id="PF04706">
    <property type="entry name" value="Dickkopf_N"/>
    <property type="match status" value="1"/>
</dbReference>
<dbReference type="Pfam" id="PF21481">
    <property type="entry name" value="DIKK1-2-4_C-subdom1"/>
    <property type="match status" value="1"/>
</dbReference>
<dbReference type="Pfam" id="PF21479">
    <property type="entry name" value="DIKK1-2-4_C-subdom2"/>
    <property type="match status" value="1"/>
</dbReference>
<proteinExistence type="evidence at protein level"/>
<reference key="1">
    <citation type="journal article" date="1999" name="Gene">
        <title>Functional and structural diversity of the human Dickkopf gene family.</title>
        <authorList>
            <person name="Krupnik V.E."/>
            <person name="Sharp J.D."/>
            <person name="Jiang C."/>
            <person name="Robison K."/>
            <person name="Chickering T.W."/>
            <person name="Amaravadi L."/>
            <person name="Brown D.E."/>
            <person name="Guyot D."/>
            <person name="Mays G."/>
            <person name="Leiby K."/>
            <person name="Chang B."/>
            <person name="Duong T."/>
            <person name="Goodearl A.D.J."/>
            <person name="Gearing D.P."/>
            <person name="Sokol S.Y."/>
            <person name="McCarthy S.A."/>
        </authorList>
    </citation>
    <scope>NUCLEOTIDE SEQUENCE [MRNA]</scope>
    <scope>PROTEIN SEQUENCE OF 19-28 AND 134-144</scope>
    <scope>PROTEOLYTIC PROCESSING</scope>
</reference>
<reference key="2">
    <citation type="journal article" date="1999" name="J. Biochem. Mol. Biol. Biophys.">
        <title>Human Dickkopf as well as DAN family members, Cerberus and Gremlin, are preferentially expressed in the epithelial malignant cell lines.</title>
        <authorList>
            <person name="Tate G."/>
            <person name="Mitsuya T."/>
        </authorList>
    </citation>
    <scope>NUCLEOTIDE SEQUENCE [GENOMIC DNA / MRNA]</scope>
</reference>
<reference key="3">
    <citation type="journal article" date="2004" name="Genome Res.">
        <title>The status, quality, and expansion of the NIH full-length cDNA project: the Mammalian Gene Collection (MGC).</title>
        <authorList>
            <consortium name="The MGC Project Team"/>
        </authorList>
    </citation>
    <scope>NUCLEOTIDE SEQUENCE [LARGE SCALE MRNA]</scope>
</reference>
<reference key="4">
    <citation type="journal article" date="2004" name="Protein Sci.">
        <title>Signal peptide prediction based on analysis of experimentally verified cleavage sites.</title>
        <authorList>
            <person name="Zhang Z."/>
            <person name="Henzel W.J."/>
        </authorList>
    </citation>
    <scope>PROTEIN SEQUENCE OF 19-33</scope>
</reference>
<reference key="5">
    <citation type="journal article" date="2006" name="Oncogene">
        <title>Function and biological roles of the Dickkopf family of Wnt modulators.</title>
        <authorList>
            <person name="Niehrs C."/>
        </authorList>
    </citation>
    <scope>REVIEW OF THE DKK FAMILY</scope>
</reference>
<keyword id="KW-0002">3D-structure</keyword>
<keyword id="KW-0165">Cleavage on pair of basic residues</keyword>
<keyword id="KW-0217">Developmental protein</keyword>
<keyword id="KW-0903">Direct protein sequencing</keyword>
<keyword id="KW-1015">Disulfide bond</keyword>
<keyword id="KW-1267">Proteomics identification</keyword>
<keyword id="KW-1185">Reference proteome</keyword>
<keyword id="KW-0964">Secreted</keyword>
<keyword id="KW-0732">Signal</keyword>
<keyword id="KW-0879">Wnt signaling pathway</keyword>
<evidence type="ECO:0000250" key="1"/>
<evidence type="ECO:0000256" key="2">
    <source>
        <dbReference type="SAM" id="MobiDB-lite"/>
    </source>
</evidence>
<evidence type="ECO:0000269" key="3">
    <source>
    </source>
</evidence>
<evidence type="ECO:0000269" key="4">
    <source>
    </source>
</evidence>
<evidence type="ECO:0000305" key="5"/>
<evidence type="ECO:0007829" key="6">
    <source>
        <dbReference type="PDB" id="5O57"/>
    </source>
</evidence>
<protein>
    <recommendedName>
        <fullName>Dickkopf-related protein 4</fullName>
        <shortName>Dickkopf-4</shortName>
        <shortName>Dkk-4</shortName>
        <shortName>hDkk-4</shortName>
    </recommendedName>
    <component>
        <recommendedName>
            <fullName>Dickkopf-related protein 4 short form</fullName>
        </recommendedName>
    </component>
</protein>
<sequence>MVAAVLLGLSWLCSPLGALVLDFNNIRSSADLHGARKGSQCLSDTDCNTRKFCLQPRDEKPFCATCRGLRRRCQRDAMCCPGTLCVNDVCTTMEDATPILERQLDEQDGTHAEGTTGHPVQENQPKRKPSIKKSQGRKGQEGESCLRTFDCGPGLCCARHFWTKICKPVLLEGQVCSRRGHKDTAQAPEIFQRCDCGPGLLCRSQLTSNRQHARLRVCQKIEKL</sequence>
<feature type="signal peptide" evidence="3 4">
    <location>
        <begin position="1"/>
        <end position="18"/>
    </location>
</feature>
<feature type="chain" id="PRO_0000007225" description="Dickkopf-related protein 4">
    <location>
        <begin position="19"/>
        <end position="224"/>
    </location>
</feature>
<feature type="chain" id="PRO_0000007226" description="Dickkopf-related protein 4 short form">
    <location>
        <begin position="134"/>
        <end position="224"/>
    </location>
</feature>
<feature type="region of interest" description="DKK-type Cys-1">
    <location>
        <begin position="41"/>
        <end position="90"/>
    </location>
</feature>
<feature type="region of interest" description="Disordered" evidence="2">
    <location>
        <begin position="109"/>
        <end position="139"/>
    </location>
</feature>
<feature type="region of interest" description="DKK-type Cys-2">
    <location>
        <begin position="145"/>
        <end position="218"/>
    </location>
</feature>
<feature type="compositionally biased region" description="Basic residues" evidence="2">
    <location>
        <begin position="126"/>
        <end position="136"/>
    </location>
</feature>
<feature type="disulfide bond" evidence="1">
    <location>
        <begin position="145"/>
        <end position="157"/>
    </location>
</feature>
<feature type="disulfide bond" evidence="1">
    <location>
        <begin position="151"/>
        <end position="166"/>
    </location>
</feature>
<feature type="disulfide bond" evidence="1">
    <location>
        <begin position="156"/>
        <end position="194"/>
    </location>
</feature>
<feature type="disulfide bond" evidence="1">
    <location>
        <begin position="176"/>
        <end position="202"/>
    </location>
</feature>
<feature type="disulfide bond" evidence="1">
    <location>
        <begin position="196"/>
        <end position="218"/>
    </location>
</feature>
<feature type="sequence conflict" description="In Ref. 2; BAA33438." evidence="5" ref="2">
    <original>M</original>
    <variation>L</variation>
    <location>
        <position position="93"/>
    </location>
</feature>
<feature type="strand" evidence="6">
    <location>
        <begin position="38"/>
        <end position="40"/>
    </location>
</feature>
<feature type="helix" evidence="6">
    <location>
        <begin position="44"/>
        <end position="46"/>
    </location>
</feature>
<feature type="strand" evidence="6">
    <location>
        <begin position="47"/>
        <end position="50"/>
    </location>
</feature>
<feature type="strand" evidence="6">
    <location>
        <begin position="57"/>
        <end position="59"/>
    </location>
</feature>
<feature type="strand" evidence="6">
    <location>
        <begin position="69"/>
        <end position="72"/>
    </location>
</feature>
<feature type="turn" evidence="6">
    <location>
        <begin position="76"/>
        <end position="78"/>
    </location>
</feature>
<feature type="strand" evidence="6">
    <location>
        <begin position="83"/>
        <end position="86"/>
    </location>
</feature>
<feature type="strand" evidence="6">
    <location>
        <begin position="89"/>
        <end position="92"/>
    </location>
</feature>
<feature type="turn" evidence="6">
    <location>
        <begin position="93"/>
        <end position="95"/>
    </location>
</feature>
<accession>Q9UBT3</accession>
<accession>Q3KNX0</accession>
<accession>Q9Y4C3</accession>
<comment type="function">
    <text evidence="1">Antagonizes canonical Wnt signaling by inhibiting LRP5/6 interaction with Wnt and by forming a ternary complex with the transmembrane protein KREMEN that promotes internalization of LRP5/6. DKKs play an important role in vertebrate development, where they locally inhibit Wnt regulated processes such as antero-posterior axial patterning, limb development, somitogenesis and eye formation. In the adult, Dkks are implicated in bone formation and bone disease, cancer and Alzheimer disease (By similarity).</text>
</comment>
<comment type="subunit">
    <text evidence="1">Interacts with LRP5 and LRP6.</text>
</comment>
<comment type="interaction">
    <interactant intactId="EBI-18030204">
        <id>Q9UBT3</id>
    </interactant>
    <interactant intactId="EBI-6166686">
        <id>Q96F15</id>
        <label>GIMAP5</label>
    </interactant>
    <organismsDiffer>false</organismsDiffer>
    <experiments>3</experiments>
</comment>
<comment type="interaction">
    <interactant intactId="EBI-18030204">
        <id>Q9UBT3</id>
    </interactant>
    <interactant intactId="EBI-2568251">
        <id>P11215</id>
        <label>ITGAM</label>
    </interactant>
    <organismsDiffer>false</organismsDiffer>
    <experiments>3</experiments>
</comment>
<comment type="interaction">
    <interactant intactId="EBI-18030204">
        <id>Q9UBT3</id>
    </interactant>
    <interactant intactId="EBI-748974">
        <id>Q96CV9</id>
        <label>OPTN</label>
    </interactant>
    <organismsDiffer>false</organismsDiffer>
    <experiments>3</experiments>
</comment>
<comment type="interaction">
    <interactant intactId="EBI-18030204">
        <id>Q9UBT3</id>
    </interactant>
    <interactant intactId="EBI-12195249">
        <id>Q5TGU0</id>
        <label>TSPO2</label>
    </interactant>
    <organismsDiffer>false</organismsDiffer>
    <experiments>3</experiments>
</comment>
<comment type="subcellular location">
    <subcellularLocation>
        <location>Secreted</location>
    </subcellularLocation>
</comment>
<comment type="tissue specificity">
    <text>Expressed in cerebellum, T-cells, esophagus and lung.</text>
</comment>
<comment type="domain">
    <text evidence="1">The C-terminal cysteine-rich domain mediates interaction with LRP5 and LRP6.</text>
</comment>
<comment type="PTM">
    <text>Appears to be not glycosylated.</text>
</comment>
<comment type="PTM">
    <text evidence="3">Can be proteolytically processed by a furin-like protease.</text>
</comment>
<comment type="similarity">
    <text evidence="5">Belongs to the dickkopf family.</text>
</comment>
<organism>
    <name type="scientific">Homo sapiens</name>
    <name type="common">Human</name>
    <dbReference type="NCBI Taxonomy" id="9606"/>
    <lineage>
        <taxon>Eukaryota</taxon>
        <taxon>Metazoa</taxon>
        <taxon>Chordata</taxon>
        <taxon>Craniata</taxon>
        <taxon>Vertebrata</taxon>
        <taxon>Euteleostomi</taxon>
        <taxon>Mammalia</taxon>
        <taxon>Eutheria</taxon>
        <taxon>Euarchontoglires</taxon>
        <taxon>Primates</taxon>
        <taxon>Haplorrhini</taxon>
        <taxon>Catarrhini</taxon>
        <taxon>Hominidae</taxon>
        <taxon>Homo</taxon>
    </lineage>
</organism>
<gene>
    <name type="primary">DKK4</name>
</gene>